<keyword id="KW-0025">Alternative splicing</keyword>
<keyword id="KW-0496">Mitochondrion</keyword>
<keyword id="KW-0520">NAD</keyword>
<keyword id="KW-0560">Oxidoreductase</keyword>
<keyword id="KW-1185">Reference proteome</keyword>
<keyword id="KW-0809">Transit peptide</keyword>
<keyword id="KW-0816">Tricarboxylic acid cycle</keyword>
<feature type="transit peptide" description="Mitochondrion" evidence="6">
    <location>
        <begin position="1"/>
        <end position="22"/>
    </location>
</feature>
<feature type="chain" id="PRO_0000224148" description="Malate dehydrogenase 2, mitochondrial">
    <location>
        <begin position="23"/>
        <end position="341"/>
    </location>
</feature>
<feature type="active site" description="Proton acceptor" evidence="2">
    <location>
        <position position="205"/>
    </location>
</feature>
<feature type="binding site" evidence="3">
    <location>
        <begin position="36"/>
        <end position="42"/>
    </location>
    <ligand>
        <name>NAD(+)</name>
        <dbReference type="ChEBI" id="CHEBI:57540"/>
    </ligand>
</feature>
<feature type="binding site" evidence="3">
    <location>
        <position position="62"/>
    </location>
    <ligand>
        <name>NAD(+)</name>
        <dbReference type="ChEBI" id="CHEBI:57540"/>
    </ligand>
</feature>
<feature type="binding site" evidence="2">
    <location>
        <position position="109"/>
    </location>
    <ligand>
        <name>substrate</name>
    </ligand>
</feature>
<feature type="binding site" evidence="2">
    <location>
        <position position="115"/>
    </location>
    <ligand>
        <name>substrate</name>
    </ligand>
</feature>
<feature type="binding site" evidence="3">
    <location>
        <position position="122"/>
    </location>
    <ligand>
        <name>NAD(+)</name>
        <dbReference type="ChEBI" id="CHEBI:57540"/>
    </ligand>
</feature>
<feature type="binding site" evidence="3">
    <location>
        <begin position="145"/>
        <end position="147"/>
    </location>
    <ligand>
        <name>NAD(+)</name>
        <dbReference type="ChEBI" id="CHEBI:57540"/>
    </ligand>
</feature>
<feature type="binding site" evidence="2">
    <location>
        <position position="147"/>
    </location>
    <ligand>
        <name>substrate</name>
    </ligand>
</feature>
<feature type="binding site" evidence="2">
    <location>
        <position position="181"/>
    </location>
    <ligand>
        <name>substrate</name>
    </ligand>
</feature>
<feature type="binding site" evidence="3">
    <location>
        <position position="256"/>
    </location>
    <ligand>
        <name>NAD(+)</name>
        <dbReference type="ChEBI" id="CHEBI:57540"/>
    </ligand>
</feature>
<name>MDHM2_ARATH</name>
<sequence>MFRSMIVRSASPVKQGLLRRGFASESVPDRKVVILGAAGGIGQPLSLLMKLNPLVSSLSLYDIANTPGVAADVGHINTRSQVSGYMGDDDLGKALEGADLVIIPAGVPRKPGMTRDDLFNINAGIVKNLSIAIAKYCPQALVNMISNPVNSTVPIAAEIFKKAGTYDEKKLFGVTTLDVVRARTFYAGKSDVNVAEVNVPVVGGHAGITILPLFSQASPQANLSDDLIRALTKRTQDGGTEVVEAKAGKGSATLSMAYAGALFADACLKGLNGVPNVVECSFVQSTITELPFFASKVRLGKNGVEEVLDLGPLSDFEKEGLEALKAELKSSIEKGIKFANQ</sequence>
<comment type="function">
    <text evidence="5 7 8 11">Catalyzes a reversible NAD-dependent dehydrogenase reaction involved in central metabolism and redox homeostasis between organelle compartments (Probable). Required for carbon dioxide and energy partitioning in leaves. May limit photorespiration during the dark phase (PubMed:20876337, PubMed:27208265). Can convert 2-ketoglutarate to L-2-hydroxyglutarate in vitro (PubMed:26203119).</text>
</comment>
<comment type="catalytic activity">
    <reaction evidence="7">
        <text>(S)-malate + NAD(+) = oxaloacetate + NADH + H(+)</text>
        <dbReference type="Rhea" id="RHEA:21432"/>
        <dbReference type="ChEBI" id="CHEBI:15378"/>
        <dbReference type="ChEBI" id="CHEBI:15589"/>
        <dbReference type="ChEBI" id="CHEBI:16452"/>
        <dbReference type="ChEBI" id="CHEBI:57540"/>
        <dbReference type="ChEBI" id="CHEBI:57945"/>
        <dbReference type="EC" id="1.1.1.37"/>
    </reaction>
</comment>
<comment type="biophysicochemical properties">
    <kinetics>
        <KM evidence="7">1.02 mM for oxaloacetate</KM>
        <KM evidence="7">7 mM for 2-ketoglutarate</KM>
        <Vmax evidence="7">0.67 mmol/min/mg enzyme toward oxaloacetate (at pH 7.4)</Vmax>
        <Vmax evidence="7">0.02 mmol/min/mg enzyme toward malate (at pH 7.4)</Vmax>
        <Vmax evidence="7">0.08 mmol/min/mg enzyme toward 2-ketoglutarate (at pH 7.4)</Vmax>
    </kinetics>
</comment>
<comment type="subunit">
    <text evidence="1">Homodimer.</text>
</comment>
<comment type="subcellular location">
    <subcellularLocation>
        <location evidence="4 12">Mitochondrion matrix</location>
    </subcellularLocation>
</comment>
<comment type="alternative products">
    <event type="alternative splicing"/>
    <isoform>
        <id>Q9LKA3-1</id>
        <name>1</name>
        <sequence type="displayed"/>
    </isoform>
    <text>A number of isoforms are produced. According to EST sequences.</text>
</comment>
<comment type="tissue specificity">
    <text evidence="5">Expressed in rosette leaves at low levels.</text>
</comment>
<comment type="disruption phenotype">
    <text evidence="5 8">No visible phenotype under normal growth conditions, but the double mutant plants mmdh1 and mmdh2 have decreased germination rate, grow slowly, are small, have increased photorespiration and die before producing seeds.</text>
</comment>
<comment type="similarity">
    <text evidence="10">Belongs to the LDH/MDH superfamily. MDH type 1 family.</text>
</comment>
<reference key="1">
    <citation type="journal article" date="2000" name="DNA Res.">
        <title>Structural analysis of Arabidopsis thaliana chromosome 3. II. Sequence features of the 4,251,695 bp regions covered by 90 P1, TAC and BAC clones.</title>
        <authorList>
            <person name="Kaneko T."/>
            <person name="Katoh T."/>
            <person name="Sato S."/>
            <person name="Nakamura Y."/>
            <person name="Asamizu E."/>
            <person name="Tabata S."/>
        </authorList>
    </citation>
    <scope>NUCLEOTIDE SEQUENCE [LARGE SCALE GENOMIC DNA]</scope>
    <source>
        <strain>cv. Columbia</strain>
    </source>
</reference>
<reference key="2">
    <citation type="journal article" date="2017" name="Plant J.">
        <title>Araport11: a complete reannotation of the Arabidopsis thaliana reference genome.</title>
        <authorList>
            <person name="Cheng C.Y."/>
            <person name="Krishnakumar V."/>
            <person name="Chan A.P."/>
            <person name="Thibaud-Nissen F."/>
            <person name="Schobel S."/>
            <person name="Town C.D."/>
        </authorList>
    </citation>
    <scope>GENOME REANNOTATION</scope>
    <source>
        <strain>cv. Columbia</strain>
    </source>
</reference>
<reference key="3">
    <citation type="journal article" date="2003" name="Science">
        <title>Empirical analysis of transcriptional activity in the Arabidopsis genome.</title>
        <authorList>
            <person name="Yamada K."/>
            <person name="Lim J."/>
            <person name="Dale J.M."/>
            <person name="Chen H."/>
            <person name="Shinn P."/>
            <person name="Palm C.J."/>
            <person name="Southwick A.M."/>
            <person name="Wu H.C."/>
            <person name="Kim C.J."/>
            <person name="Nguyen M."/>
            <person name="Pham P.K."/>
            <person name="Cheuk R.F."/>
            <person name="Karlin-Newmann G."/>
            <person name="Liu S.X."/>
            <person name="Lam B."/>
            <person name="Sakano H."/>
            <person name="Wu T."/>
            <person name="Yu G."/>
            <person name="Miranda M."/>
            <person name="Quach H.L."/>
            <person name="Tripp M."/>
            <person name="Chang C.H."/>
            <person name="Lee J.M."/>
            <person name="Toriumi M.J."/>
            <person name="Chan M.M."/>
            <person name="Tang C.C."/>
            <person name="Onodera C.S."/>
            <person name="Deng J.M."/>
            <person name="Akiyama K."/>
            <person name="Ansari Y."/>
            <person name="Arakawa T."/>
            <person name="Banh J."/>
            <person name="Banno F."/>
            <person name="Bowser L."/>
            <person name="Brooks S.Y."/>
            <person name="Carninci P."/>
            <person name="Chao Q."/>
            <person name="Choy N."/>
            <person name="Enju A."/>
            <person name="Goldsmith A.D."/>
            <person name="Gurjal M."/>
            <person name="Hansen N.F."/>
            <person name="Hayashizaki Y."/>
            <person name="Johnson-Hopson C."/>
            <person name="Hsuan V.W."/>
            <person name="Iida K."/>
            <person name="Karnes M."/>
            <person name="Khan S."/>
            <person name="Koesema E."/>
            <person name="Ishida J."/>
            <person name="Jiang P.X."/>
            <person name="Jones T."/>
            <person name="Kawai J."/>
            <person name="Kamiya A."/>
            <person name="Meyers C."/>
            <person name="Nakajima M."/>
            <person name="Narusaka M."/>
            <person name="Seki M."/>
            <person name="Sakurai T."/>
            <person name="Satou M."/>
            <person name="Tamse R."/>
            <person name="Vaysberg M."/>
            <person name="Wallender E.K."/>
            <person name="Wong C."/>
            <person name="Yamamura Y."/>
            <person name="Yuan S."/>
            <person name="Shinozaki K."/>
            <person name="Davis R.W."/>
            <person name="Theologis A."/>
            <person name="Ecker J.R."/>
        </authorList>
    </citation>
    <scope>NUCLEOTIDE SEQUENCE [LARGE SCALE MRNA]</scope>
    <source>
        <strain>cv. Columbia</strain>
    </source>
</reference>
<reference key="4">
    <citation type="journal article" date="2004" name="Plant Cell">
        <title>Experimental analysis of the Arabidopsis mitochondrial proteome highlights signaling and regulatory components, provides assessment of targeting prediction programs, and indicates plant-specific mitochondrial proteins.</title>
        <authorList>
            <person name="Heazlewood J.L."/>
            <person name="Tonti-Filippini J.S."/>
            <person name="Gout A.M."/>
            <person name="Day D.A."/>
            <person name="Whelan J."/>
            <person name="Millar A.H."/>
        </authorList>
    </citation>
    <scope>IDENTIFICATION BY MASS SPECTROMETRY</scope>
    <scope>SUBCELLULAR LOCATION [LARGE SCALE ANALYSIS]</scope>
    <source>
        <strain>cv. Landsberg erecta</strain>
    </source>
</reference>
<reference key="5">
    <citation type="journal article" date="2010" name="Plant Physiol.">
        <title>Mitochondrial malate dehydrogenase lowers leaf respiration and alters photorespiration and plant growth in Arabidopsis.</title>
        <authorList>
            <person name="Tomaz T."/>
            <person name="Bagard M."/>
            <person name="Pracharoenwattana I."/>
            <person name="Linden P."/>
            <person name="Lee C.P."/>
            <person name="Carroll A.J."/>
            <person name="Stroeher E."/>
            <person name="Smith S.M."/>
            <person name="Gardestroem P."/>
            <person name="Millar A.H."/>
        </authorList>
    </citation>
    <scope>IDENTIFICATION BY MASS SPECTROMETRY</scope>
    <scope>FUNCTION</scope>
    <scope>TISSUE SPECIFICITY</scope>
    <scope>DISRUPTION PHENOTYPE</scope>
</reference>
<reference key="6">
    <citation type="journal article" date="2015" name="J. Exp. Bot.">
        <title>Identification of cleavage sites and substrate proteins for two mitochondrial intermediate peptidases in Arabidopsis thaliana.</title>
        <authorList>
            <person name="Carrie C."/>
            <person name="Venne A.S."/>
            <person name="Zahedi R.P."/>
            <person name="Soll J."/>
        </authorList>
    </citation>
    <scope>IDENTIFICATION BY MASS SPECTROMETRY</scope>
    <scope>CLEAVAGE OF TRANSIT PEPTIDE AFTER PHE-22</scope>
</reference>
<reference key="7">
    <citation type="journal article" date="2015" name="Plant Cell Physiol.">
        <title>Plants possess a cyclic mitochondrial metabolic pathway similar to the mammalian metabolic repair mechanism involving malate dehydrogenase and l-2-hydroxyglutarate dehydrogenase.</title>
        <authorList>
            <person name="Huedig M."/>
            <person name="Maier A."/>
            <person name="Scherrers I."/>
            <person name="Seidel L."/>
            <person name="Jansen E.E."/>
            <person name="Mettler-Altmann T."/>
            <person name="Engqvist M.K."/>
            <person name="Maurino V.G."/>
        </authorList>
    </citation>
    <scope>FUNCTION</scope>
    <scope>CATALYTIC ACTIVITY</scope>
    <scope>BIOPHYSICOCHEMICAL PROPERTIES</scope>
</reference>
<reference key="8">
    <citation type="journal article" date="2016" name="Plant Physiol.">
        <title>Loss of mitochondrial malate dehydrogenase activity alters seed metabolism impairing seed maturation and post-germination growth in Arabidopsis.</title>
        <authorList>
            <person name="Sew Y.S."/>
            <person name="Stroeher E."/>
            <person name="Fenske R."/>
            <person name="Millar A.H."/>
        </authorList>
    </citation>
    <scope>FUNCTION</scope>
    <scope>DISRUPTION PHENOTYPE</scope>
</reference>
<gene>
    <name type="ordered locus">At3g15020</name>
    <name type="ORF">K15M2.16</name>
</gene>
<proteinExistence type="evidence at protein level"/>
<dbReference type="EC" id="1.1.1.37" evidence="7"/>
<dbReference type="EMBL" id="AP000370">
    <property type="protein sequence ID" value="BAA97065.1"/>
    <property type="molecule type" value="Genomic_DNA"/>
</dbReference>
<dbReference type="EMBL" id="CP002686">
    <property type="protein sequence ID" value="AEE75604.1"/>
    <property type="molecule type" value="Genomic_DNA"/>
</dbReference>
<dbReference type="EMBL" id="AY045592">
    <property type="protein sequence ID" value="AAK73950.1"/>
    <property type="molecule type" value="mRNA"/>
</dbReference>
<dbReference type="EMBL" id="AY093788">
    <property type="protein sequence ID" value="AAM10404.1"/>
    <property type="molecule type" value="mRNA"/>
</dbReference>
<dbReference type="RefSeq" id="NP_188120.1">
    <molecule id="Q9LKA3-1"/>
    <property type="nucleotide sequence ID" value="NM_112364.4"/>
</dbReference>
<dbReference type="SMR" id="Q9LKA3"/>
<dbReference type="BioGRID" id="6065">
    <property type="interactions" value="26"/>
</dbReference>
<dbReference type="FunCoup" id="Q9LKA3">
    <property type="interactions" value="3184"/>
</dbReference>
<dbReference type="STRING" id="3702.Q9LKA3"/>
<dbReference type="iPTMnet" id="Q9LKA3"/>
<dbReference type="PaxDb" id="3702-AT3G15020.1"/>
<dbReference type="ProteomicsDB" id="239048">
    <molecule id="Q9LKA3-1"/>
</dbReference>
<dbReference type="EnsemblPlants" id="AT3G15020.1">
    <molecule id="Q9LKA3-1"/>
    <property type="protein sequence ID" value="AT3G15020.1"/>
    <property type="gene ID" value="AT3G15020"/>
</dbReference>
<dbReference type="Gramene" id="AT3G15020.1">
    <molecule id="Q9LKA3-1"/>
    <property type="protein sequence ID" value="AT3G15020.1"/>
    <property type="gene ID" value="AT3G15020"/>
</dbReference>
<dbReference type="KEGG" id="ath:AT3G15020"/>
<dbReference type="Araport" id="AT3G15020"/>
<dbReference type="TAIR" id="AT3G15020">
    <property type="gene designation" value="MMDH2"/>
</dbReference>
<dbReference type="eggNOG" id="KOG1494">
    <property type="taxonomic scope" value="Eukaryota"/>
</dbReference>
<dbReference type="HOGENOM" id="CLU_047181_0_2_1"/>
<dbReference type="InParanoid" id="Q9LKA3"/>
<dbReference type="OMA" id="CASTHLL"/>
<dbReference type="PhylomeDB" id="Q9LKA3"/>
<dbReference type="BRENDA" id="1.1.1.37">
    <property type="organism ID" value="399"/>
</dbReference>
<dbReference type="PRO" id="PR:Q9LKA3"/>
<dbReference type="Proteomes" id="UP000006548">
    <property type="component" value="Chromosome 3"/>
</dbReference>
<dbReference type="ExpressionAtlas" id="Q9LKA3">
    <property type="expression patterns" value="baseline and differential"/>
</dbReference>
<dbReference type="GO" id="GO:0048046">
    <property type="term" value="C:apoplast"/>
    <property type="evidence" value="ECO:0007005"/>
    <property type="project" value="TAIR"/>
</dbReference>
<dbReference type="GO" id="GO:0005829">
    <property type="term" value="C:cytosol"/>
    <property type="evidence" value="ECO:0007005"/>
    <property type="project" value="TAIR"/>
</dbReference>
<dbReference type="GO" id="GO:0005759">
    <property type="term" value="C:mitochondrial matrix"/>
    <property type="evidence" value="ECO:0007669"/>
    <property type="project" value="UniProtKB-SubCell"/>
</dbReference>
<dbReference type="GO" id="GO:0005739">
    <property type="term" value="C:mitochondrion"/>
    <property type="evidence" value="ECO:0007005"/>
    <property type="project" value="TAIR"/>
</dbReference>
<dbReference type="GO" id="GO:0005507">
    <property type="term" value="F:copper ion binding"/>
    <property type="evidence" value="ECO:0007005"/>
    <property type="project" value="TAIR"/>
</dbReference>
<dbReference type="GO" id="GO:0030060">
    <property type="term" value="F:L-malate dehydrogenase (NAD+) activity"/>
    <property type="evidence" value="ECO:0000316"/>
    <property type="project" value="TAIR"/>
</dbReference>
<dbReference type="GO" id="GO:0006108">
    <property type="term" value="P:malate metabolic process"/>
    <property type="evidence" value="ECO:0007669"/>
    <property type="project" value="InterPro"/>
</dbReference>
<dbReference type="GO" id="GO:0006099">
    <property type="term" value="P:tricarboxylic acid cycle"/>
    <property type="evidence" value="ECO:0007669"/>
    <property type="project" value="UniProtKB-KW"/>
</dbReference>
<dbReference type="CDD" id="cd01337">
    <property type="entry name" value="MDH_glyoxysomal_mitochondrial"/>
    <property type="match status" value="1"/>
</dbReference>
<dbReference type="FunFam" id="3.40.50.720:FF:000013">
    <property type="entry name" value="Malate dehydrogenase"/>
    <property type="match status" value="1"/>
</dbReference>
<dbReference type="FunFam" id="3.90.110.10:FF:000001">
    <property type="entry name" value="Malate dehydrogenase"/>
    <property type="match status" value="1"/>
</dbReference>
<dbReference type="Gene3D" id="3.90.110.10">
    <property type="entry name" value="Lactate dehydrogenase/glycoside hydrolase, family 4, C-terminal"/>
    <property type="match status" value="1"/>
</dbReference>
<dbReference type="Gene3D" id="3.40.50.720">
    <property type="entry name" value="NAD(P)-binding Rossmann-like Domain"/>
    <property type="match status" value="1"/>
</dbReference>
<dbReference type="InterPro" id="IPR001557">
    <property type="entry name" value="L-lactate/malate_DH"/>
</dbReference>
<dbReference type="InterPro" id="IPR022383">
    <property type="entry name" value="Lactate/malate_DH_C"/>
</dbReference>
<dbReference type="InterPro" id="IPR001236">
    <property type="entry name" value="Lactate/malate_DH_N"/>
</dbReference>
<dbReference type="InterPro" id="IPR015955">
    <property type="entry name" value="Lactate_DH/Glyco_Ohase_4_C"/>
</dbReference>
<dbReference type="InterPro" id="IPR001252">
    <property type="entry name" value="Malate_DH_AS"/>
</dbReference>
<dbReference type="InterPro" id="IPR010097">
    <property type="entry name" value="Malate_DH_type1"/>
</dbReference>
<dbReference type="InterPro" id="IPR036291">
    <property type="entry name" value="NAD(P)-bd_dom_sf"/>
</dbReference>
<dbReference type="NCBIfam" id="TIGR01772">
    <property type="entry name" value="MDH_euk_gproteo"/>
    <property type="match status" value="1"/>
</dbReference>
<dbReference type="PANTHER" id="PTHR11540">
    <property type="entry name" value="MALATE AND LACTATE DEHYDROGENASE"/>
    <property type="match status" value="1"/>
</dbReference>
<dbReference type="PANTHER" id="PTHR11540:SF58">
    <property type="entry name" value="MALATE DEHYDROGENASE 1, MITOCHONDRIAL-RELATED"/>
    <property type="match status" value="1"/>
</dbReference>
<dbReference type="Pfam" id="PF02866">
    <property type="entry name" value="Ldh_1_C"/>
    <property type="match status" value="1"/>
</dbReference>
<dbReference type="Pfam" id="PF00056">
    <property type="entry name" value="Ldh_1_N"/>
    <property type="match status" value="1"/>
</dbReference>
<dbReference type="PIRSF" id="PIRSF000102">
    <property type="entry name" value="Lac_mal_DH"/>
    <property type="match status" value="1"/>
</dbReference>
<dbReference type="SUPFAM" id="SSF56327">
    <property type="entry name" value="LDH C-terminal domain-like"/>
    <property type="match status" value="1"/>
</dbReference>
<dbReference type="SUPFAM" id="SSF51735">
    <property type="entry name" value="NAD(P)-binding Rossmann-fold domains"/>
    <property type="match status" value="1"/>
</dbReference>
<dbReference type="PROSITE" id="PS00068">
    <property type="entry name" value="MDH"/>
    <property type="match status" value="1"/>
</dbReference>
<evidence type="ECO:0000250" key="1"/>
<evidence type="ECO:0000250" key="2">
    <source>
        <dbReference type="UniProtKB" id="P11708"/>
    </source>
</evidence>
<evidence type="ECO:0000250" key="3">
    <source>
        <dbReference type="UniProtKB" id="P40926"/>
    </source>
</evidence>
<evidence type="ECO:0000269" key="4">
    <source>
    </source>
</evidence>
<evidence type="ECO:0000269" key="5">
    <source>
    </source>
</evidence>
<evidence type="ECO:0000269" key="6">
    <source>
    </source>
</evidence>
<evidence type="ECO:0000269" key="7">
    <source>
    </source>
</evidence>
<evidence type="ECO:0000269" key="8">
    <source>
    </source>
</evidence>
<evidence type="ECO:0000303" key="9">
    <source>
    </source>
</evidence>
<evidence type="ECO:0000305" key="10"/>
<evidence type="ECO:0000305" key="11">
    <source>
    </source>
</evidence>
<evidence type="ECO:0000305" key="12">
    <source>
    </source>
</evidence>
<protein>
    <recommendedName>
        <fullName evidence="10">Malate dehydrogenase 2, mitochondrial</fullName>
        <ecNumber evidence="7">1.1.1.37</ecNumber>
    </recommendedName>
    <alternativeName>
        <fullName evidence="9">Mitochondrial MDH2</fullName>
        <shortName evidence="9">mMDH2</shortName>
    </alternativeName>
    <alternativeName>
        <fullName evidence="10">Mitochondrial NAD-dependent malate dehydrogenase 2</fullName>
        <shortName evidence="10">mNAD-MDH 2</shortName>
        <shortName evidence="9">mtNAD-MDH2</shortName>
    </alternativeName>
</protein>
<organism>
    <name type="scientific">Arabidopsis thaliana</name>
    <name type="common">Mouse-ear cress</name>
    <dbReference type="NCBI Taxonomy" id="3702"/>
    <lineage>
        <taxon>Eukaryota</taxon>
        <taxon>Viridiplantae</taxon>
        <taxon>Streptophyta</taxon>
        <taxon>Embryophyta</taxon>
        <taxon>Tracheophyta</taxon>
        <taxon>Spermatophyta</taxon>
        <taxon>Magnoliopsida</taxon>
        <taxon>eudicotyledons</taxon>
        <taxon>Gunneridae</taxon>
        <taxon>Pentapetalae</taxon>
        <taxon>rosids</taxon>
        <taxon>malvids</taxon>
        <taxon>Brassicales</taxon>
        <taxon>Brassicaceae</taxon>
        <taxon>Camelineae</taxon>
        <taxon>Arabidopsis</taxon>
    </lineage>
</organism>
<accession>Q9LKA3</accession>